<organism>
    <name type="scientific">Salmonella paratyphi A (strain ATCC 9150 / SARB42)</name>
    <dbReference type="NCBI Taxonomy" id="295319"/>
    <lineage>
        <taxon>Bacteria</taxon>
        <taxon>Pseudomonadati</taxon>
        <taxon>Pseudomonadota</taxon>
        <taxon>Gammaproteobacteria</taxon>
        <taxon>Enterobacterales</taxon>
        <taxon>Enterobacteriaceae</taxon>
        <taxon>Salmonella</taxon>
    </lineage>
</organism>
<accession>Q5PLE9</accession>
<comment type="function">
    <text evidence="1">Catalyzes the reversible aldol cleavage of N-acetylneuraminic acid (sialic acid; Neu5Ac) to form pyruvate and N-acetylmannosamine (ManNAc) via a Schiff base intermediate.</text>
</comment>
<comment type="catalytic activity">
    <reaction evidence="1">
        <text>aceneuramate = aldehydo-N-acetyl-D-mannosamine + pyruvate</text>
        <dbReference type="Rhea" id="RHEA:23296"/>
        <dbReference type="ChEBI" id="CHEBI:15361"/>
        <dbReference type="ChEBI" id="CHEBI:17122"/>
        <dbReference type="ChEBI" id="CHEBI:173083"/>
        <dbReference type="EC" id="4.1.3.3"/>
    </reaction>
</comment>
<comment type="pathway">
    <text evidence="1">Amino-sugar metabolism; N-acetylneuraminate degradation; D-fructose 6-phosphate from N-acetylneuraminate: step 1/5.</text>
</comment>
<comment type="subunit">
    <text evidence="1">Homotetramer.</text>
</comment>
<comment type="subcellular location">
    <subcellularLocation>
        <location evidence="1">Cytoplasm</location>
    </subcellularLocation>
</comment>
<comment type="similarity">
    <text evidence="1">Belongs to the DapA family. NanA subfamily.</text>
</comment>
<gene>
    <name evidence="1" type="primary">nanA</name>
    <name type="ordered locus">SPA3207</name>
</gene>
<dbReference type="EC" id="4.1.3.3" evidence="1"/>
<dbReference type="EMBL" id="CP000026">
    <property type="protein sequence ID" value="AAV79031.1"/>
    <property type="molecule type" value="Genomic_DNA"/>
</dbReference>
<dbReference type="RefSeq" id="WP_001029662.1">
    <property type="nucleotide sequence ID" value="NC_006511.1"/>
</dbReference>
<dbReference type="SMR" id="Q5PLE9"/>
<dbReference type="KEGG" id="spt:SPA3207"/>
<dbReference type="HOGENOM" id="CLU_049343_6_0_6"/>
<dbReference type="UniPathway" id="UPA00629">
    <property type="reaction ID" value="UER00680"/>
</dbReference>
<dbReference type="Proteomes" id="UP000008185">
    <property type="component" value="Chromosome"/>
</dbReference>
<dbReference type="GO" id="GO:0005829">
    <property type="term" value="C:cytosol"/>
    <property type="evidence" value="ECO:0007669"/>
    <property type="project" value="TreeGrafter"/>
</dbReference>
<dbReference type="GO" id="GO:0008747">
    <property type="term" value="F:N-acetylneuraminate lyase activity"/>
    <property type="evidence" value="ECO:0007669"/>
    <property type="project" value="UniProtKB-UniRule"/>
</dbReference>
<dbReference type="GO" id="GO:0005975">
    <property type="term" value="P:carbohydrate metabolic process"/>
    <property type="evidence" value="ECO:0007669"/>
    <property type="project" value="UniProtKB-UniRule"/>
</dbReference>
<dbReference type="GO" id="GO:0019262">
    <property type="term" value="P:N-acetylneuraminate catabolic process"/>
    <property type="evidence" value="ECO:0007669"/>
    <property type="project" value="UniProtKB-UniRule"/>
</dbReference>
<dbReference type="CDD" id="cd00954">
    <property type="entry name" value="NAL"/>
    <property type="match status" value="1"/>
</dbReference>
<dbReference type="FunFam" id="3.20.20.70:FF:000039">
    <property type="entry name" value="N-acetylneuraminate lyase"/>
    <property type="match status" value="1"/>
</dbReference>
<dbReference type="Gene3D" id="3.20.20.70">
    <property type="entry name" value="Aldolase class I"/>
    <property type="match status" value="1"/>
</dbReference>
<dbReference type="HAMAP" id="MF_01237">
    <property type="entry name" value="N_acetylneuram_lyase"/>
    <property type="match status" value="1"/>
</dbReference>
<dbReference type="InterPro" id="IPR013785">
    <property type="entry name" value="Aldolase_TIM"/>
</dbReference>
<dbReference type="InterPro" id="IPR002220">
    <property type="entry name" value="DapA-like"/>
</dbReference>
<dbReference type="InterPro" id="IPR005264">
    <property type="entry name" value="NanA"/>
</dbReference>
<dbReference type="InterPro" id="IPR020625">
    <property type="entry name" value="Schiff_base-form_aldolases_AS"/>
</dbReference>
<dbReference type="InterPro" id="IPR020624">
    <property type="entry name" value="Schiff_base-form_aldolases_CS"/>
</dbReference>
<dbReference type="NCBIfam" id="TIGR00683">
    <property type="entry name" value="nanA"/>
    <property type="match status" value="1"/>
</dbReference>
<dbReference type="NCBIfam" id="NF003164">
    <property type="entry name" value="PRK04147.1"/>
    <property type="match status" value="1"/>
</dbReference>
<dbReference type="PANTHER" id="PTHR42849">
    <property type="entry name" value="N-ACETYLNEURAMINATE LYASE"/>
    <property type="match status" value="1"/>
</dbReference>
<dbReference type="PANTHER" id="PTHR42849:SF1">
    <property type="entry name" value="N-ACETYLNEURAMINATE LYASE"/>
    <property type="match status" value="1"/>
</dbReference>
<dbReference type="Pfam" id="PF00701">
    <property type="entry name" value="DHDPS"/>
    <property type="match status" value="1"/>
</dbReference>
<dbReference type="PIRSF" id="PIRSF001365">
    <property type="entry name" value="DHDPS"/>
    <property type="match status" value="1"/>
</dbReference>
<dbReference type="PRINTS" id="PR00146">
    <property type="entry name" value="DHPICSNTHASE"/>
</dbReference>
<dbReference type="SMART" id="SM01130">
    <property type="entry name" value="DHDPS"/>
    <property type="match status" value="1"/>
</dbReference>
<dbReference type="SUPFAM" id="SSF51569">
    <property type="entry name" value="Aldolase"/>
    <property type="match status" value="1"/>
</dbReference>
<dbReference type="PROSITE" id="PS00665">
    <property type="entry name" value="DHDPS_1"/>
    <property type="match status" value="1"/>
</dbReference>
<dbReference type="PROSITE" id="PS00666">
    <property type="entry name" value="DHDPS_2"/>
    <property type="match status" value="1"/>
</dbReference>
<keyword id="KW-0119">Carbohydrate metabolism</keyword>
<keyword id="KW-0963">Cytoplasm</keyword>
<keyword id="KW-0456">Lyase</keyword>
<keyword id="KW-0704">Schiff base</keyword>
<name>NANA_SALPA</name>
<reference key="1">
    <citation type="journal article" date="2004" name="Nat. Genet.">
        <title>Comparison of genome degradation in Paratyphi A and Typhi, human-restricted serovars of Salmonella enterica that cause typhoid.</title>
        <authorList>
            <person name="McClelland M."/>
            <person name="Sanderson K.E."/>
            <person name="Clifton S.W."/>
            <person name="Latreille P."/>
            <person name="Porwollik S."/>
            <person name="Sabo A."/>
            <person name="Meyer R."/>
            <person name="Bieri T."/>
            <person name="Ozersky P."/>
            <person name="McLellan M."/>
            <person name="Harkins C.R."/>
            <person name="Wang C."/>
            <person name="Nguyen C."/>
            <person name="Berghoff A."/>
            <person name="Elliott G."/>
            <person name="Kohlberg S."/>
            <person name="Strong C."/>
            <person name="Du F."/>
            <person name="Carter J."/>
            <person name="Kremizki C."/>
            <person name="Layman D."/>
            <person name="Leonard S."/>
            <person name="Sun H."/>
            <person name="Fulton L."/>
            <person name="Nash W."/>
            <person name="Miner T."/>
            <person name="Minx P."/>
            <person name="Delehaunty K."/>
            <person name="Fronick C."/>
            <person name="Magrini V."/>
            <person name="Nhan M."/>
            <person name="Warren W."/>
            <person name="Florea L."/>
            <person name="Spieth J."/>
            <person name="Wilson R.K."/>
        </authorList>
    </citation>
    <scope>NUCLEOTIDE SEQUENCE [LARGE SCALE GENOMIC DNA]</scope>
    <source>
        <strain>ATCC 9150 / SARB42</strain>
    </source>
</reference>
<proteinExistence type="inferred from homology"/>
<protein>
    <recommendedName>
        <fullName evidence="1">N-acetylneuraminate lyase</fullName>
        <shortName evidence="1">NAL</shortName>
        <shortName evidence="1">Neu5Ac lyase</shortName>
        <ecNumber evidence="1">4.1.3.3</ecNumber>
    </recommendedName>
    <alternativeName>
        <fullName evidence="1">N-acetylneuraminate pyruvate-lyase</fullName>
    </alternativeName>
    <alternativeName>
        <fullName evidence="1">N-acetylneuraminic acid aldolase</fullName>
    </alternativeName>
    <alternativeName>
        <fullName evidence="1">Sialate lyase</fullName>
    </alternativeName>
    <alternativeName>
        <fullName evidence="1">Sialic acid aldolase</fullName>
    </alternativeName>
    <alternativeName>
        <fullName evidence="1">Sialic acid lyase</fullName>
    </alternativeName>
</protein>
<evidence type="ECO:0000255" key="1">
    <source>
        <dbReference type="HAMAP-Rule" id="MF_01237"/>
    </source>
</evidence>
<feature type="chain" id="PRO_1000066931" description="N-acetylneuraminate lyase">
    <location>
        <begin position="1"/>
        <end position="297"/>
    </location>
</feature>
<feature type="active site" description="Proton donor" evidence="1">
    <location>
        <position position="137"/>
    </location>
</feature>
<feature type="active site" description="Schiff-base intermediate with substrate" evidence="1">
    <location>
        <position position="165"/>
    </location>
</feature>
<feature type="binding site" evidence="1">
    <location>
        <position position="47"/>
    </location>
    <ligand>
        <name>aceneuramate</name>
        <dbReference type="ChEBI" id="CHEBI:173083"/>
    </ligand>
</feature>
<feature type="binding site" evidence="1">
    <location>
        <position position="48"/>
    </location>
    <ligand>
        <name>aceneuramate</name>
        <dbReference type="ChEBI" id="CHEBI:173083"/>
    </ligand>
</feature>
<feature type="binding site" evidence="1">
    <location>
        <position position="167"/>
    </location>
    <ligand>
        <name>aceneuramate</name>
        <dbReference type="ChEBI" id="CHEBI:173083"/>
    </ligand>
</feature>
<feature type="binding site" evidence="1">
    <location>
        <position position="189"/>
    </location>
    <ligand>
        <name>aceneuramate</name>
        <dbReference type="ChEBI" id="CHEBI:173083"/>
    </ligand>
</feature>
<feature type="binding site" evidence="1">
    <location>
        <position position="191"/>
    </location>
    <ligand>
        <name>aceneuramate</name>
        <dbReference type="ChEBI" id="CHEBI:173083"/>
    </ligand>
</feature>
<feature type="binding site" evidence="1">
    <location>
        <position position="192"/>
    </location>
    <ligand>
        <name>aceneuramate</name>
        <dbReference type="ChEBI" id="CHEBI:173083"/>
    </ligand>
</feature>
<feature type="binding site" evidence="1">
    <location>
        <position position="208"/>
    </location>
    <ligand>
        <name>aceneuramate</name>
        <dbReference type="ChEBI" id="CHEBI:173083"/>
    </ligand>
</feature>
<sequence length="297" mass="32482">MAKALQGVMAALLTPFDHQQQLDSESLRRLVRFNIGQGIDGLYVGGSTGEAFVQSLAEREQVLEIVAEEAKGKITLIAHVGTVSTAESQQLASAAKRYGFDAVSAVTPFYYPFSFEEHCDHYRAIIDSADGLPMVVYNIPALSGVKLTLDQINTLVTLPGVNALKQTSGDLFQMEQIRRAHPDLVLYNGYDEIFASGLLAGADGGIGSTYNIMGWRYQGIVQALREGDVAKAQRLQTECNKVIDLLIKTGVFRGLKTVLHYMDVVSVPLCRKPFAPVDEKYLPALKALAQQLMEEKA</sequence>